<organism>
    <name type="scientific">Bovine coronavirus (strain Mebus)</name>
    <name type="common">BCoV</name>
    <name type="synonym">BCV</name>
    <dbReference type="NCBI Taxonomy" id="11132"/>
    <lineage>
        <taxon>Viruses</taxon>
        <taxon>Riboviria</taxon>
        <taxon>Orthornavirae</taxon>
        <taxon>Pisuviricota</taxon>
        <taxon>Pisoniviricetes</taxon>
        <taxon>Nidovirales</taxon>
        <taxon>Cornidovirineae</taxon>
        <taxon>Coronaviridae</taxon>
        <taxon>Orthocoronavirinae</taxon>
        <taxon>Betacoronavirus</taxon>
        <taxon>Embecovirus</taxon>
        <taxon>Betacoronavirus 1</taxon>
    </lineage>
</organism>
<feature type="chain" id="PRO_0000106062" description="Non-structural protein of 4.9 kDa">
    <location>
        <begin position="1"/>
        <end position="43"/>
    </location>
</feature>
<gene>
    <name type="ORF">4a</name>
</gene>
<name>NS49_CVBM</name>
<organismHost>
    <name type="scientific">Bos taurus</name>
    <name type="common">Bovine</name>
    <dbReference type="NCBI Taxonomy" id="9913"/>
</organismHost>
<proteinExistence type="inferred from homology"/>
<dbReference type="EMBL" id="U00735">
    <property type="protein sequence ID" value="AAK29738.2"/>
    <property type="molecule type" value="Genomic_RNA"/>
</dbReference>
<dbReference type="PIR" id="A46346">
    <property type="entry name" value="A46346"/>
</dbReference>
<dbReference type="Proteomes" id="UP000007554">
    <property type="component" value="Genome"/>
</dbReference>
<dbReference type="InterPro" id="IPR009314">
    <property type="entry name" value="Corona_NS1"/>
</dbReference>
<dbReference type="Pfam" id="PF06145">
    <property type="entry name" value="Corona_NS1"/>
    <property type="match status" value="1"/>
</dbReference>
<accession>P15778</accession>
<evidence type="ECO:0000305" key="1"/>
<reference key="1">
    <citation type="journal article" date="1990" name="Virology">
        <title>Sequence and expression analysis of potential nonstructural proteins of 4.9, 4.8, 12.7, and 9.5 kDa encoded between the spike and membrane protein genes of the bovine coronavirus.</title>
        <authorList>
            <person name="Abraham S."/>
            <person name="Kienzle T.E."/>
            <person name="Lapps W.E."/>
            <person name="Brian D.A."/>
        </authorList>
    </citation>
    <scope>NUCLEOTIDE SEQUENCE [GENOMIC RNA]</scope>
</reference>
<sequence>MTTKFVFDLLAPDDILHPFNHVKLIIRPIEVEHIIIATTMPAV</sequence>
<comment type="similarity">
    <text evidence="1">Belongs to the coronaviruses ns4.9 protein family.</text>
</comment>
<protein>
    <recommendedName>
        <fullName>Non-structural protein of 4.9 kDa</fullName>
        <shortName>ns4.9</shortName>
    </recommendedName>
    <alternativeName>
        <fullName>4.9 kDa accessory protein</fullName>
    </alternativeName>
</protein>